<organism>
    <name type="scientific">Ureaplasma parvum serovar 3 (strain ATCC 27815 / 27 / NCTC 11736)</name>
    <dbReference type="NCBI Taxonomy" id="505682"/>
    <lineage>
        <taxon>Bacteria</taxon>
        <taxon>Bacillati</taxon>
        <taxon>Mycoplasmatota</taxon>
        <taxon>Mycoplasmoidales</taxon>
        <taxon>Mycoplasmoidaceae</taxon>
        <taxon>Ureaplasma</taxon>
    </lineage>
</organism>
<accession>B1AIH2</accession>
<keyword id="KW-0963">Cytoplasm</keyword>
<keyword id="KW-0324">Glycolysis</keyword>
<keyword id="KW-0456">Lyase</keyword>
<keyword id="KW-0460">Magnesium</keyword>
<keyword id="KW-0479">Metal-binding</keyword>
<keyword id="KW-0964">Secreted</keyword>
<reference key="1">
    <citation type="submission" date="2008-02" db="EMBL/GenBank/DDBJ databases">
        <title>Genome sequence of Ureaplasma parvum serovar 3.</title>
        <authorList>
            <person name="Methe B.A."/>
            <person name="Glass J."/>
            <person name="Waites K."/>
            <person name="Shrivastava S."/>
        </authorList>
    </citation>
    <scope>NUCLEOTIDE SEQUENCE [LARGE SCALE GENOMIC DNA]</scope>
    <source>
        <strain>ATCC 27815 / 27 / NCTC 11736</strain>
    </source>
</reference>
<comment type="function">
    <text evidence="1">Catalyzes the reversible conversion of 2-phosphoglycerate (2-PG) into phosphoenolpyruvate (PEP). It is essential for the degradation of carbohydrates via glycolysis.</text>
</comment>
<comment type="catalytic activity">
    <reaction evidence="1">
        <text>(2R)-2-phosphoglycerate = phosphoenolpyruvate + H2O</text>
        <dbReference type="Rhea" id="RHEA:10164"/>
        <dbReference type="ChEBI" id="CHEBI:15377"/>
        <dbReference type="ChEBI" id="CHEBI:58289"/>
        <dbReference type="ChEBI" id="CHEBI:58702"/>
        <dbReference type="EC" id="4.2.1.11"/>
    </reaction>
</comment>
<comment type="cofactor">
    <cofactor evidence="1">
        <name>Mg(2+)</name>
        <dbReference type="ChEBI" id="CHEBI:18420"/>
    </cofactor>
    <text evidence="1">Binds a second Mg(2+) ion via substrate during catalysis.</text>
</comment>
<comment type="pathway">
    <text evidence="1">Carbohydrate degradation; glycolysis; pyruvate from D-glyceraldehyde 3-phosphate: step 4/5.</text>
</comment>
<comment type="subcellular location">
    <subcellularLocation>
        <location evidence="1">Cytoplasm</location>
    </subcellularLocation>
    <subcellularLocation>
        <location evidence="1">Secreted</location>
    </subcellularLocation>
    <subcellularLocation>
        <location evidence="1">Cell surface</location>
    </subcellularLocation>
    <text evidence="1">Fractions of enolase are present in both the cytoplasm and on the cell surface.</text>
</comment>
<comment type="similarity">
    <text evidence="1">Belongs to the enolase family.</text>
</comment>
<dbReference type="EC" id="4.2.1.11" evidence="1"/>
<dbReference type="EMBL" id="CP000942">
    <property type="protein sequence ID" value="ACA33076.1"/>
    <property type="molecule type" value="Genomic_DNA"/>
</dbReference>
<dbReference type="RefSeq" id="WP_006688966.1">
    <property type="nucleotide sequence ID" value="NC_010503.1"/>
</dbReference>
<dbReference type="SMR" id="B1AIH2"/>
<dbReference type="GeneID" id="29672638"/>
<dbReference type="KEGG" id="upa:UPA3_0191"/>
<dbReference type="HOGENOM" id="CLU_031223_2_1_14"/>
<dbReference type="UniPathway" id="UPA00109">
    <property type="reaction ID" value="UER00187"/>
</dbReference>
<dbReference type="Proteomes" id="UP000002162">
    <property type="component" value="Chromosome"/>
</dbReference>
<dbReference type="GO" id="GO:0009986">
    <property type="term" value="C:cell surface"/>
    <property type="evidence" value="ECO:0007669"/>
    <property type="project" value="UniProtKB-SubCell"/>
</dbReference>
<dbReference type="GO" id="GO:0005576">
    <property type="term" value="C:extracellular region"/>
    <property type="evidence" value="ECO:0007669"/>
    <property type="project" value="UniProtKB-SubCell"/>
</dbReference>
<dbReference type="GO" id="GO:0000015">
    <property type="term" value="C:phosphopyruvate hydratase complex"/>
    <property type="evidence" value="ECO:0007669"/>
    <property type="project" value="InterPro"/>
</dbReference>
<dbReference type="GO" id="GO:0000287">
    <property type="term" value="F:magnesium ion binding"/>
    <property type="evidence" value="ECO:0007669"/>
    <property type="project" value="UniProtKB-UniRule"/>
</dbReference>
<dbReference type="GO" id="GO:0004634">
    <property type="term" value="F:phosphopyruvate hydratase activity"/>
    <property type="evidence" value="ECO:0007669"/>
    <property type="project" value="UniProtKB-UniRule"/>
</dbReference>
<dbReference type="GO" id="GO:0006096">
    <property type="term" value="P:glycolytic process"/>
    <property type="evidence" value="ECO:0007669"/>
    <property type="project" value="UniProtKB-UniRule"/>
</dbReference>
<dbReference type="CDD" id="cd03313">
    <property type="entry name" value="enolase"/>
    <property type="match status" value="1"/>
</dbReference>
<dbReference type="Gene3D" id="3.20.20.120">
    <property type="entry name" value="Enolase-like C-terminal domain"/>
    <property type="match status" value="1"/>
</dbReference>
<dbReference type="Gene3D" id="3.30.390.10">
    <property type="entry name" value="Enolase-like, N-terminal domain"/>
    <property type="match status" value="1"/>
</dbReference>
<dbReference type="HAMAP" id="MF_00318">
    <property type="entry name" value="Enolase"/>
    <property type="match status" value="1"/>
</dbReference>
<dbReference type="InterPro" id="IPR000941">
    <property type="entry name" value="Enolase"/>
</dbReference>
<dbReference type="InterPro" id="IPR036849">
    <property type="entry name" value="Enolase-like_C_sf"/>
</dbReference>
<dbReference type="InterPro" id="IPR029017">
    <property type="entry name" value="Enolase-like_N"/>
</dbReference>
<dbReference type="InterPro" id="IPR020810">
    <property type="entry name" value="Enolase_C"/>
</dbReference>
<dbReference type="InterPro" id="IPR020809">
    <property type="entry name" value="Enolase_CS"/>
</dbReference>
<dbReference type="InterPro" id="IPR020811">
    <property type="entry name" value="Enolase_N"/>
</dbReference>
<dbReference type="NCBIfam" id="TIGR01060">
    <property type="entry name" value="eno"/>
    <property type="match status" value="1"/>
</dbReference>
<dbReference type="PANTHER" id="PTHR11902">
    <property type="entry name" value="ENOLASE"/>
    <property type="match status" value="1"/>
</dbReference>
<dbReference type="PANTHER" id="PTHR11902:SF1">
    <property type="entry name" value="ENOLASE"/>
    <property type="match status" value="1"/>
</dbReference>
<dbReference type="Pfam" id="PF00113">
    <property type="entry name" value="Enolase_C"/>
    <property type="match status" value="1"/>
</dbReference>
<dbReference type="Pfam" id="PF03952">
    <property type="entry name" value="Enolase_N"/>
    <property type="match status" value="1"/>
</dbReference>
<dbReference type="PIRSF" id="PIRSF001400">
    <property type="entry name" value="Enolase"/>
    <property type="match status" value="1"/>
</dbReference>
<dbReference type="PRINTS" id="PR00148">
    <property type="entry name" value="ENOLASE"/>
</dbReference>
<dbReference type="SFLD" id="SFLDF00002">
    <property type="entry name" value="enolase"/>
    <property type="match status" value="1"/>
</dbReference>
<dbReference type="SFLD" id="SFLDG00178">
    <property type="entry name" value="enolase"/>
    <property type="match status" value="1"/>
</dbReference>
<dbReference type="SMART" id="SM01192">
    <property type="entry name" value="Enolase_C"/>
    <property type="match status" value="1"/>
</dbReference>
<dbReference type="SMART" id="SM01193">
    <property type="entry name" value="Enolase_N"/>
    <property type="match status" value="1"/>
</dbReference>
<dbReference type="SUPFAM" id="SSF51604">
    <property type="entry name" value="Enolase C-terminal domain-like"/>
    <property type="match status" value="1"/>
</dbReference>
<dbReference type="SUPFAM" id="SSF54826">
    <property type="entry name" value="Enolase N-terminal domain-like"/>
    <property type="match status" value="1"/>
</dbReference>
<dbReference type="PROSITE" id="PS00164">
    <property type="entry name" value="ENOLASE"/>
    <property type="match status" value="1"/>
</dbReference>
<feature type="chain" id="PRO_1000079159" description="Enolase">
    <location>
        <begin position="1"/>
        <end position="440"/>
    </location>
</feature>
<feature type="active site" description="Proton donor" evidence="1">
    <location>
        <position position="210"/>
    </location>
</feature>
<feature type="active site" description="Proton acceptor" evidence="1">
    <location>
        <position position="351"/>
    </location>
</feature>
<feature type="binding site" evidence="1">
    <location>
        <position position="168"/>
    </location>
    <ligand>
        <name>(2R)-2-phosphoglycerate</name>
        <dbReference type="ChEBI" id="CHEBI:58289"/>
    </ligand>
</feature>
<feature type="binding site" evidence="1">
    <location>
        <position position="249"/>
    </location>
    <ligand>
        <name>Mg(2+)</name>
        <dbReference type="ChEBI" id="CHEBI:18420"/>
    </ligand>
</feature>
<feature type="binding site" evidence="1">
    <location>
        <position position="300"/>
    </location>
    <ligand>
        <name>Mg(2+)</name>
        <dbReference type="ChEBI" id="CHEBI:18420"/>
    </ligand>
</feature>
<feature type="binding site" evidence="1">
    <location>
        <position position="326"/>
    </location>
    <ligand>
        <name>Mg(2+)</name>
        <dbReference type="ChEBI" id="CHEBI:18420"/>
    </ligand>
</feature>
<feature type="binding site" evidence="1">
    <location>
        <position position="351"/>
    </location>
    <ligand>
        <name>(2R)-2-phosphoglycerate</name>
        <dbReference type="ChEBI" id="CHEBI:58289"/>
    </ligand>
</feature>
<feature type="binding site" evidence="1">
    <location>
        <position position="380"/>
    </location>
    <ligand>
        <name>(2R)-2-phosphoglycerate</name>
        <dbReference type="ChEBI" id="CHEBI:58289"/>
    </ligand>
</feature>
<feature type="binding site" evidence="1">
    <location>
        <position position="381"/>
    </location>
    <ligand>
        <name>(2R)-2-phosphoglycerate</name>
        <dbReference type="ChEBI" id="CHEBI:58289"/>
    </ligand>
</feature>
<feature type="binding site" evidence="1">
    <location>
        <position position="402"/>
    </location>
    <ligand>
        <name>(2R)-2-phosphoglycerate</name>
        <dbReference type="ChEBI" id="CHEBI:58289"/>
    </ligand>
</feature>
<proteinExistence type="inferred from homology"/>
<evidence type="ECO:0000255" key="1">
    <source>
        <dbReference type="HAMAP-Rule" id="MF_00318"/>
    </source>
</evidence>
<name>ENO_UREP2</name>
<protein>
    <recommendedName>
        <fullName evidence="1">Enolase</fullName>
        <ecNumber evidence="1">4.2.1.11</ecNumber>
    </recommendedName>
    <alternativeName>
        <fullName evidence="1">2-phospho-D-glycerate hydro-lyase</fullName>
    </alternativeName>
    <alternativeName>
        <fullName evidence="1">2-phosphoglycerate dehydratase</fullName>
    </alternativeName>
</protein>
<sequence length="440" mass="49301">MKIINLLAYQILDSRGQPTVAVKLFLENDQSVIAMVPSGASTGAKEALELRDGDVNYFFNKSVKLAIQNINNIIRPHLINKNVLNFFELDNLLINLDGTENKSKLGANALLGVSIAIVKAGAIAASKPLYQYIKEDLMHNYDVNYYAPIPLMNFINGGAHADNDLDIQEFMIVPLNAISFSQAIQIGSEIFHQLDKLLKSNHLSTTKGDEGGFAPMLKNNYVTLELLVHAIKKAHYLPSKTQGVCLALDVAASELYENGKYFFKKSSSHNITLEQTSFSSDEWIKYWSKLVSMFPIISIEDCFEENDWNSFALFLKNNPHIQVVGDDLYCTNLKYLQKGIDFKATNAILIKPNQIGTISETLDVIKFAQKNNINTIISHRSGETEDTFIADLAIGVGAGQIKTGSLSRSERIAKYNRILEIEQELKDKLIYEPSKFFKFR</sequence>
<gene>
    <name evidence="1" type="primary">eno</name>
    <name type="ordered locus">UPA3_0191</name>
</gene>